<organism>
    <name type="scientific">Pelotomaculum thermopropionicum (strain DSM 13744 / JCM 10971 / SI)</name>
    <dbReference type="NCBI Taxonomy" id="370438"/>
    <lineage>
        <taxon>Bacteria</taxon>
        <taxon>Bacillati</taxon>
        <taxon>Bacillota</taxon>
        <taxon>Clostridia</taxon>
        <taxon>Eubacteriales</taxon>
        <taxon>Desulfotomaculaceae</taxon>
        <taxon>Pelotomaculum</taxon>
    </lineage>
</organism>
<reference key="1">
    <citation type="journal article" date="2008" name="Genome Res.">
        <title>The genome of Pelotomaculum thermopropionicum reveals niche-associated evolution in anaerobic microbiota.</title>
        <authorList>
            <person name="Kosaka T."/>
            <person name="Kato S."/>
            <person name="Shimoyama T."/>
            <person name="Ishii S."/>
            <person name="Abe T."/>
            <person name="Watanabe K."/>
        </authorList>
    </citation>
    <scope>NUCLEOTIDE SEQUENCE [LARGE SCALE GENOMIC DNA]</scope>
    <source>
        <strain>DSM 13744 / JCM 10971 / SI</strain>
    </source>
</reference>
<comment type="function">
    <text evidence="1">This protein binds to 23S rRNA in the presence of protein L20.</text>
</comment>
<comment type="subunit">
    <text evidence="1">Part of the 50S ribosomal subunit. Contacts protein L20.</text>
</comment>
<comment type="similarity">
    <text evidence="1">Belongs to the bacterial ribosomal protein bL21 family.</text>
</comment>
<sequence length="103" mass="11720">MYAIIETGGKQYRVREGDTLYVEKLPAGAGETVEADRVLAVIKDGEVMIGTPSVENAKVFLKVERHGRGKKIIVYKYKPKKNYRRKKGHRQPFSRVTVEKIEA</sequence>
<name>RL21_PELTS</name>
<accession>A5D407</accession>
<dbReference type="EMBL" id="AP009389">
    <property type="protein sequence ID" value="BAF59011.1"/>
    <property type="molecule type" value="Genomic_DNA"/>
</dbReference>
<dbReference type="SMR" id="A5D407"/>
<dbReference type="STRING" id="370438.PTH_0830"/>
<dbReference type="KEGG" id="pth:PTH_0830"/>
<dbReference type="eggNOG" id="COG0261">
    <property type="taxonomic scope" value="Bacteria"/>
</dbReference>
<dbReference type="HOGENOM" id="CLU_061463_3_2_9"/>
<dbReference type="Proteomes" id="UP000006556">
    <property type="component" value="Chromosome"/>
</dbReference>
<dbReference type="GO" id="GO:0005737">
    <property type="term" value="C:cytoplasm"/>
    <property type="evidence" value="ECO:0007669"/>
    <property type="project" value="UniProtKB-ARBA"/>
</dbReference>
<dbReference type="GO" id="GO:1990904">
    <property type="term" value="C:ribonucleoprotein complex"/>
    <property type="evidence" value="ECO:0007669"/>
    <property type="project" value="UniProtKB-KW"/>
</dbReference>
<dbReference type="GO" id="GO:0005840">
    <property type="term" value="C:ribosome"/>
    <property type="evidence" value="ECO:0007669"/>
    <property type="project" value="UniProtKB-KW"/>
</dbReference>
<dbReference type="GO" id="GO:0019843">
    <property type="term" value="F:rRNA binding"/>
    <property type="evidence" value="ECO:0007669"/>
    <property type="project" value="UniProtKB-UniRule"/>
</dbReference>
<dbReference type="GO" id="GO:0003735">
    <property type="term" value="F:structural constituent of ribosome"/>
    <property type="evidence" value="ECO:0007669"/>
    <property type="project" value="InterPro"/>
</dbReference>
<dbReference type="GO" id="GO:0006412">
    <property type="term" value="P:translation"/>
    <property type="evidence" value="ECO:0007669"/>
    <property type="project" value="UniProtKB-UniRule"/>
</dbReference>
<dbReference type="HAMAP" id="MF_01363">
    <property type="entry name" value="Ribosomal_bL21"/>
    <property type="match status" value="1"/>
</dbReference>
<dbReference type="InterPro" id="IPR028909">
    <property type="entry name" value="bL21-like"/>
</dbReference>
<dbReference type="InterPro" id="IPR036164">
    <property type="entry name" value="bL21-like_sf"/>
</dbReference>
<dbReference type="InterPro" id="IPR001787">
    <property type="entry name" value="Ribosomal_bL21"/>
</dbReference>
<dbReference type="InterPro" id="IPR018258">
    <property type="entry name" value="Ribosomal_bL21_CS"/>
</dbReference>
<dbReference type="NCBIfam" id="TIGR00061">
    <property type="entry name" value="L21"/>
    <property type="match status" value="1"/>
</dbReference>
<dbReference type="PANTHER" id="PTHR21349">
    <property type="entry name" value="50S RIBOSOMAL PROTEIN L21"/>
    <property type="match status" value="1"/>
</dbReference>
<dbReference type="PANTHER" id="PTHR21349:SF0">
    <property type="entry name" value="LARGE RIBOSOMAL SUBUNIT PROTEIN BL21M"/>
    <property type="match status" value="1"/>
</dbReference>
<dbReference type="Pfam" id="PF00829">
    <property type="entry name" value="Ribosomal_L21p"/>
    <property type="match status" value="1"/>
</dbReference>
<dbReference type="SUPFAM" id="SSF141091">
    <property type="entry name" value="L21p-like"/>
    <property type="match status" value="1"/>
</dbReference>
<dbReference type="PROSITE" id="PS01169">
    <property type="entry name" value="RIBOSOMAL_L21"/>
    <property type="match status" value="1"/>
</dbReference>
<feature type="chain" id="PRO_1000086988" description="Large ribosomal subunit protein bL21">
    <location>
        <begin position="1"/>
        <end position="103"/>
    </location>
</feature>
<feature type="region of interest" description="Disordered" evidence="2">
    <location>
        <begin position="83"/>
        <end position="103"/>
    </location>
</feature>
<feature type="compositionally biased region" description="Basic residues" evidence="2">
    <location>
        <begin position="83"/>
        <end position="92"/>
    </location>
</feature>
<proteinExistence type="inferred from homology"/>
<gene>
    <name evidence="1" type="primary">rplU</name>
    <name type="ordered locus">PTH_0830</name>
</gene>
<evidence type="ECO:0000255" key="1">
    <source>
        <dbReference type="HAMAP-Rule" id="MF_01363"/>
    </source>
</evidence>
<evidence type="ECO:0000256" key="2">
    <source>
        <dbReference type="SAM" id="MobiDB-lite"/>
    </source>
</evidence>
<evidence type="ECO:0000305" key="3"/>
<protein>
    <recommendedName>
        <fullName evidence="1">Large ribosomal subunit protein bL21</fullName>
    </recommendedName>
    <alternativeName>
        <fullName evidence="3">50S ribosomal protein L21</fullName>
    </alternativeName>
</protein>
<keyword id="KW-1185">Reference proteome</keyword>
<keyword id="KW-0687">Ribonucleoprotein</keyword>
<keyword id="KW-0689">Ribosomal protein</keyword>
<keyword id="KW-0694">RNA-binding</keyword>
<keyword id="KW-0699">rRNA-binding</keyword>